<proteinExistence type="inferred from homology"/>
<sequence length="37" mass="4060">MVEPLLSGIVLGLIPITLAGLFVTAYLQYRRGDQLDL</sequence>
<organism>
    <name type="scientific">Zygnema circumcarinatum</name>
    <name type="common">Green alga</name>
    <dbReference type="NCBI Taxonomy" id="35869"/>
    <lineage>
        <taxon>Eukaryota</taxon>
        <taxon>Viridiplantae</taxon>
        <taxon>Streptophyta</taxon>
        <taxon>Zygnematophyceae</taxon>
        <taxon>Zygnematophycidae</taxon>
        <taxon>Zygnematales</taxon>
        <taxon>Zygnemataceae</taxon>
        <taxon>Zygnema</taxon>
    </lineage>
</organism>
<gene>
    <name evidence="1" type="primary">petG</name>
</gene>
<keyword id="KW-0150">Chloroplast</keyword>
<keyword id="KW-0249">Electron transport</keyword>
<keyword id="KW-0472">Membrane</keyword>
<keyword id="KW-0602">Photosynthesis</keyword>
<keyword id="KW-0934">Plastid</keyword>
<keyword id="KW-0793">Thylakoid</keyword>
<keyword id="KW-0812">Transmembrane</keyword>
<keyword id="KW-1133">Transmembrane helix</keyword>
<keyword id="KW-0813">Transport</keyword>
<reference key="1">
    <citation type="journal article" date="2005" name="BMC Biol.">
        <title>The complete chloroplast DNA sequences of the charophycean green algae Staurastrum and Zygnema reveal that the chloroplast genome underwent extensive changes during the evolution of the Zygnematales.</title>
        <authorList>
            <person name="Turmel M."/>
            <person name="Otis C."/>
            <person name="Lemieux C."/>
        </authorList>
    </citation>
    <scope>NUCLEOTIDE SEQUENCE [LARGE SCALE GENOMIC DNA]</scope>
</reference>
<comment type="function">
    <text evidence="1">Component of the cytochrome b6-f complex, which mediates electron transfer between photosystem II (PSII) and photosystem I (PSI), cyclic electron flow around PSI, and state transitions. PetG is required for either the stability or assembly of the cytochrome b6-f complex.</text>
</comment>
<comment type="subunit">
    <text evidence="1">The 4 large subunits of the cytochrome b6-f complex are cytochrome b6, subunit IV (17 kDa polypeptide, PetD), cytochrome f and the Rieske protein, while the 4 small subunits are PetG, PetL, PetM and PetN. The complex functions as a dimer.</text>
</comment>
<comment type="subcellular location">
    <subcellularLocation>
        <location evidence="1">Plastid</location>
        <location evidence="1">Chloroplast thylakoid membrane</location>
        <topology evidence="1">Single-pass membrane protein</topology>
    </subcellularLocation>
</comment>
<comment type="similarity">
    <text evidence="1">Belongs to the PetG family.</text>
</comment>
<dbReference type="EMBL" id="AY958086">
    <property type="protein sequence ID" value="AAX45827.1"/>
    <property type="molecule type" value="Genomic_DNA"/>
</dbReference>
<dbReference type="RefSeq" id="YP_636550.1">
    <property type="nucleotide sequence ID" value="NC_008117.1"/>
</dbReference>
<dbReference type="SMR" id="Q32RH6"/>
<dbReference type="GeneID" id="4108147"/>
<dbReference type="GO" id="GO:0009535">
    <property type="term" value="C:chloroplast thylakoid membrane"/>
    <property type="evidence" value="ECO:0007669"/>
    <property type="project" value="UniProtKB-SubCell"/>
</dbReference>
<dbReference type="GO" id="GO:0009512">
    <property type="term" value="C:cytochrome b6f complex"/>
    <property type="evidence" value="ECO:0007669"/>
    <property type="project" value="InterPro"/>
</dbReference>
<dbReference type="GO" id="GO:0045158">
    <property type="term" value="F:electron transporter, transferring electrons within cytochrome b6/f complex of photosystem II activity"/>
    <property type="evidence" value="ECO:0007669"/>
    <property type="project" value="UniProtKB-UniRule"/>
</dbReference>
<dbReference type="GO" id="GO:0017004">
    <property type="term" value="P:cytochrome complex assembly"/>
    <property type="evidence" value="ECO:0007669"/>
    <property type="project" value="UniProtKB-UniRule"/>
</dbReference>
<dbReference type="GO" id="GO:0015979">
    <property type="term" value="P:photosynthesis"/>
    <property type="evidence" value="ECO:0007669"/>
    <property type="project" value="UniProtKB-KW"/>
</dbReference>
<dbReference type="HAMAP" id="MF_00432">
    <property type="entry name" value="Cytb6_f_PetG"/>
    <property type="match status" value="1"/>
</dbReference>
<dbReference type="InterPro" id="IPR003683">
    <property type="entry name" value="Cyt_6/f_cplx_su5"/>
</dbReference>
<dbReference type="InterPro" id="IPR036099">
    <property type="entry name" value="Cyt_6/f_cplx_su5_sf"/>
</dbReference>
<dbReference type="NCBIfam" id="NF001907">
    <property type="entry name" value="PRK00665.1"/>
    <property type="match status" value="1"/>
</dbReference>
<dbReference type="Pfam" id="PF02529">
    <property type="entry name" value="PetG"/>
    <property type="match status" value="1"/>
</dbReference>
<dbReference type="PIRSF" id="PIRSF000034">
    <property type="entry name" value="Cyt_b6-f_V"/>
    <property type="match status" value="1"/>
</dbReference>
<dbReference type="SUPFAM" id="SSF103446">
    <property type="entry name" value="PetG subunit of the cytochrome b6f complex"/>
    <property type="match status" value="1"/>
</dbReference>
<protein>
    <recommendedName>
        <fullName evidence="1">Cytochrome b6-f complex subunit 5</fullName>
    </recommendedName>
    <alternativeName>
        <fullName evidence="1">Cytochrome b6-f complex subunit PetG</fullName>
    </alternativeName>
    <alternativeName>
        <fullName evidence="1">Cytochrome b6-f complex subunit V</fullName>
    </alternativeName>
</protein>
<feature type="chain" id="PRO_0000275514" description="Cytochrome b6-f complex subunit 5">
    <location>
        <begin position="1"/>
        <end position="37"/>
    </location>
</feature>
<feature type="transmembrane region" description="Helical" evidence="1">
    <location>
        <begin position="5"/>
        <end position="25"/>
    </location>
</feature>
<geneLocation type="chloroplast"/>
<accession>Q32RH6</accession>
<name>PETG_ZYGCR</name>
<evidence type="ECO:0000255" key="1">
    <source>
        <dbReference type="HAMAP-Rule" id="MF_00432"/>
    </source>
</evidence>